<dbReference type="EMBL" id="U27561">
    <property type="protein sequence ID" value="AAC48307.1"/>
    <property type="molecule type" value="mRNA"/>
</dbReference>
<dbReference type="EMBL" id="AE014296">
    <property type="protein sequence ID" value="AAF47857.1"/>
    <property type="molecule type" value="Genomic_DNA"/>
</dbReference>
<dbReference type="EMBL" id="AE014296">
    <property type="protein sequence ID" value="AAN11591.1"/>
    <property type="molecule type" value="Genomic_DNA"/>
</dbReference>
<dbReference type="EMBL" id="AY060317">
    <property type="protein sequence ID" value="AAL25356.1"/>
    <property type="molecule type" value="mRNA"/>
</dbReference>
<dbReference type="PIR" id="A57217">
    <property type="entry name" value="A57217"/>
</dbReference>
<dbReference type="RefSeq" id="NP_523920.1">
    <property type="nucleotide sequence ID" value="NM_079196.3"/>
</dbReference>
<dbReference type="RefSeq" id="NP_728952.1">
    <property type="nucleotide sequence ID" value="NM_168067.2"/>
</dbReference>
<dbReference type="BioGRID" id="63982">
    <property type="interactions" value="1"/>
</dbReference>
<dbReference type="FunCoup" id="P48613">
    <property type="interactions" value="133"/>
</dbReference>
<dbReference type="STRING" id="7227.FBpp0073076"/>
<dbReference type="TCDB" id="8.A.19.1.1">
    <property type="family name" value="the sodium channel auxiliary subunit tipe (scat) family"/>
</dbReference>
<dbReference type="GlyCosmos" id="P48613">
    <property type="glycosylation" value="5 sites, No reported glycans"/>
</dbReference>
<dbReference type="GlyGen" id="P48613">
    <property type="glycosylation" value="6 sites"/>
</dbReference>
<dbReference type="PaxDb" id="7227-FBpp0073076"/>
<dbReference type="DNASU" id="38504"/>
<dbReference type="EnsemblMetazoa" id="FBtr0073219">
    <property type="protein sequence ID" value="FBpp0073075"/>
    <property type="gene ID" value="FBgn0003710"/>
</dbReference>
<dbReference type="EnsemblMetazoa" id="FBtr0073220">
    <property type="protein sequence ID" value="FBpp0073076"/>
    <property type="gene ID" value="FBgn0003710"/>
</dbReference>
<dbReference type="GeneID" id="38504"/>
<dbReference type="KEGG" id="dme:Dmel_CG1232"/>
<dbReference type="AGR" id="FB:FBgn0003710"/>
<dbReference type="CTD" id="38504"/>
<dbReference type="FlyBase" id="FBgn0003710">
    <property type="gene designation" value="tipE"/>
</dbReference>
<dbReference type="VEuPathDB" id="VectorBase:FBgn0003710"/>
<dbReference type="eggNOG" id="ENOG502RCF1">
    <property type="taxonomic scope" value="Eukaryota"/>
</dbReference>
<dbReference type="GeneTree" id="ENSGT00940000167912"/>
<dbReference type="HOGENOM" id="CLU_041592_0_0_1"/>
<dbReference type="InParanoid" id="P48613"/>
<dbReference type="OMA" id="DCTQIRV"/>
<dbReference type="OrthoDB" id="8190202at2759"/>
<dbReference type="PhylomeDB" id="P48613"/>
<dbReference type="BioGRID-ORCS" id="38504">
    <property type="hits" value="0 hits in 1 CRISPR screen"/>
</dbReference>
<dbReference type="GenomeRNAi" id="38504"/>
<dbReference type="PRO" id="PR:P48613"/>
<dbReference type="Proteomes" id="UP000000803">
    <property type="component" value="Chromosome 3L"/>
</dbReference>
<dbReference type="Bgee" id="FBgn0003710">
    <property type="expression patterns" value="Expressed in mechanosensory neuron (Drosophila) in imaginal disc-derived wing and 163 other cell types or tissues"/>
</dbReference>
<dbReference type="GO" id="GO:0005886">
    <property type="term" value="C:plasma membrane"/>
    <property type="evidence" value="ECO:0000314"/>
    <property type="project" value="FlyBase"/>
</dbReference>
<dbReference type="GO" id="GO:0017080">
    <property type="term" value="F:sodium channel regulator activity"/>
    <property type="evidence" value="ECO:0000314"/>
    <property type="project" value="FlyBase"/>
</dbReference>
<dbReference type="GO" id="GO:0005248">
    <property type="term" value="F:voltage-gated sodium channel activity"/>
    <property type="evidence" value="ECO:0000304"/>
    <property type="project" value="FlyBase"/>
</dbReference>
<dbReference type="GO" id="GO:0034605">
    <property type="term" value="P:cellular response to heat"/>
    <property type="evidence" value="ECO:0000314"/>
    <property type="project" value="FlyBase"/>
</dbReference>
<dbReference type="GO" id="GO:0045433">
    <property type="term" value="P:male courtship behavior, veined wing generated song production"/>
    <property type="evidence" value="ECO:0000315"/>
    <property type="project" value="FlyBase"/>
</dbReference>
<dbReference type="GO" id="GO:0002028">
    <property type="term" value="P:regulation of sodium ion transport"/>
    <property type="evidence" value="ECO:0000314"/>
    <property type="project" value="FlyBase"/>
</dbReference>
<dbReference type="GO" id="GO:0006814">
    <property type="term" value="P:sodium ion transport"/>
    <property type="evidence" value="ECO:0000303"/>
    <property type="project" value="FlyBase"/>
</dbReference>
<dbReference type="InterPro" id="IPR031578">
    <property type="entry name" value="TipE"/>
</dbReference>
<dbReference type="PANTHER" id="PTHR12335:SF6">
    <property type="entry name" value="PROTEIN TIPE"/>
    <property type="match status" value="1"/>
</dbReference>
<dbReference type="PANTHER" id="PTHR12335">
    <property type="entry name" value="TIPE PROTEIN TEMPERATURE-INDUCED PARALYTIC E"/>
    <property type="match status" value="1"/>
</dbReference>
<dbReference type="Pfam" id="PF16972">
    <property type="entry name" value="TipE"/>
    <property type="match status" value="1"/>
</dbReference>
<evidence type="ECO:0000255" key="1"/>
<evidence type="ECO:0000256" key="2">
    <source>
        <dbReference type="SAM" id="MobiDB-lite"/>
    </source>
</evidence>
<evidence type="ECO:0000269" key="3">
    <source>
    </source>
</evidence>
<accession>P48613</accession>
<accession>A4V1G4</accession>
<accession>Q9VZG6</accession>
<feature type="chain" id="PRO_0000072546" description="Protein tipE">
    <location>
        <begin position="1"/>
        <end position="452"/>
    </location>
</feature>
<feature type="topological domain" description="Cytoplasmic" evidence="1">
    <location>
        <begin position="1"/>
        <end position="20"/>
    </location>
</feature>
<feature type="transmembrane region" description="Helical" evidence="1">
    <location>
        <begin position="21"/>
        <end position="41"/>
    </location>
</feature>
<feature type="topological domain" description="Extracellular" evidence="1">
    <location>
        <begin position="42"/>
        <end position="274"/>
    </location>
</feature>
<feature type="transmembrane region" description="Helical" evidence="1">
    <location>
        <begin position="275"/>
        <end position="295"/>
    </location>
</feature>
<feature type="topological domain" description="Cytoplasmic" evidence="1">
    <location>
        <begin position="296"/>
        <end position="452"/>
    </location>
</feature>
<feature type="region of interest" description="Disordered" evidence="2">
    <location>
        <begin position="423"/>
        <end position="452"/>
    </location>
</feature>
<feature type="compositionally biased region" description="Polar residues" evidence="2">
    <location>
        <begin position="423"/>
        <end position="444"/>
    </location>
</feature>
<feature type="glycosylation site" description="N-linked (GlcNAc...) asparagine" evidence="1">
    <location>
        <position position="72"/>
    </location>
</feature>
<feature type="glycosylation site" description="N-linked (GlcNAc...) asparagine" evidence="1">
    <location>
        <position position="102"/>
    </location>
</feature>
<feature type="glycosylation site" description="N-linked (GlcNAc...) asparagine" evidence="1">
    <location>
        <position position="108"/>
    </location>
</feature>
<feature type="glycosylation site" description="N-linked (GlcNAc...) asparagine" evidence="1">
    <location>
        <position position="212"/>
    </location>
</feature>
<feature type="glycosylation site" description="N-linked (GlcNAc...) asparagine" evidence="1">
    <location>
        <position position="237"/>
    </location>
</feature>
<reference key="1">
    <citation type="journal article" date="1995" name="Cell">
        <title>Cloning and functional analysis of TipE, a novel membrane protein that enhances Drosophila para sodium channel function.</title>
        <authorList>
            <person name="Feng G."/>
            <person name="Deak P."/>
            <person name="Chopra M."/>
            <person name="Hall L.M."/>
        </authorList>
    </citation>
    <scope>NUCLEOTIDE SEQUENCE [MRNA]</scope>
    <scope>FUNCTION</scope>
    <scope>TISSUE SPECIFICITY</scope>
    <scope>DEVELOPMENTAL STAGE</scope>
    <source>
        <strain>Canton-S</strain>
        <tissue>Head</tissue>
    </source>
</reference>
<reference key="2">
    <citation type="journal article" date="2000" name="Science">
        <title>The genome sequence of Drosophila melanogaster.</title>
        <authorList>
            <person name="Adams M.D."/>
            <person name="Celniker S.E."/>
            <person name="Holt R.A."/>
            <person name="Evans C.A."/>
            <person name="Gocayne J.D."/>
            <person name="Amanatides P.G."/>
            <person name="Scherer S.E."/>
            <person name="Li P.W."/>
            <person name="Hoskins R.A."/>
            <person name="Galle R.F."/>
            <person name="George R.A."/>
            <person name="Lewis S.E."/>
            <person name="Richards S."/>
            <person name="Ashburner M."/>
            <person name="Henderson S.N."/>
            <person name="Sutton G.G."/>
            <person name="Wortman J.R."/>
            <person name="Yandell M.D."/>
            <person name="Zhang Q."/>
            <person name="Chen L.X."/>
            <person name="Brandon R.C."/>
            <person name="Rogers Y.-H.C."/>
            <person name="Blazej R.G."/>
            <person name="Champe M."/>
            <person name="Pfeiffer B.D."/>
            <person name="Wan K.H."/>
            <person name="Doyle C."/>
            <person name="Baxter E.G."/>
            <person name="Helt G."/>
            <person name="Nelson C.R."/>
            <person name="Miklos G.L.G."/>
            <person name="Abril J.F."/>
            <person name="Agbayani A."/>
            <person name="An H.-J."/>
            <person name="Andrews-Pfannkoch C."/>
            <person name="Baldwin D."/>
            <person name="Ballew R.M."/>
            <person name="Basu A."/>
            <person name="Baxendale J."/>
            <person name="Bayraktaroglu L."/>
            <person name="Beasley E.M."/>
            <person name="Beeson K.Y."/>
            <person name="Benos P.V."/>
            <person name="Berman B.P."/>
            <person name="Bhandari D."/>
            <person name="Bolshakov S."/>
            <person name="Borkova D."/>
            <person name="Botchan M.R."/>
            <person name="Bouck J."/>
            <person name="Brokstein P."/>
            <person name="Brottier P."/>
            <person name="Burtis K.C."/>
            <person name="Busam D.A."/>
            <person name="Butler H."/>
            <person name="Cadieu E."/>
            <person name="Center A."/>
            <person name="Chandra I."/>
            <person name="Cherry J.M."/>
            <person name="Cawley S."/>
            <person name="Dahlke C."/>
            <person name="Davenport L.B."/>
            <person name="Davies P."/>
            <person name="de Pablos B."/>
            <person name="Delcher A."/>
            <person name="Deng Z."/>
            <person name="Mays A.D."/>
            <person name="Dew I."/>
            <person name="Dietz S.M."/>
            <person name="Dodson K."/>
            <person name="Doup L.E."/>
            <person name="Downes M."/>
            <person name="Dugan-Rocha S."/>
            <person name="Dunkov B.C."/>
            <person name="Dunn P."/>
            <person name="Durbin K.J."/>
            <person name="Evangelista C.C."/>
            <person name="Ferraz C."/>
            <person name="Ferriera S."/>
            <person name="Fleischmann W."/>
            <person name="Fosler C."/>
            <person name="Gabrielian A.E."/>
            <person name="Garg N.S."/>
            <person name="Gelbart W.M."/>
            <person name="Glasser K."/>
            <person name="Glodek A."/>
            <person name="Gong F."/>
            <person name="Gorrell J.H."/>
            <person name="Gu Z."/>
            <person name="Guan P."/>
            <person name="Harris M."/>
            <person name="Harris N.L."/>
            <person name="Harvey D.A."/>
            <person name="Heiman T.J."/>
            <person name="Hernandez J.R."/>
            <person name="Houck J."/>
            <person name="Hostin D."/>
            <person name="Houston K.A."/>
            <person name="Howland T.J."/>
            <person name="Wei M.-H."/>
            <person name="Ibegwam C."/>
            <person name="Jalali M."/>
            <person name="Kalush F."/>
            <person name="Karpen G.H."/>
            <person name="Ke Z."/>
            <person name="Kennison J.A."/>
            <person name="Ketchum K.A."/>
            <person name="Kimmel B.E."/>
            <person name="Kodira C.D."/>
            <person name="Kraft C.L."/>
            <person name="Kravitz S."/>
            <person name="Kulp D."/>
            <person name="Lai Z."/>
            <person name="Lasko P."/>
            <person name="Lei Y."/>
            <person name="Levitsky A.A."/>
            <person name="Li J.H."/>
            <person name="Li Z."/>
            <person name="Liang Y."/>
            <person name="Lin X."/>
            <person name="Liu X."/>
            <person name="Mattei B."/>
            <person name="McIntosh T.C."/>
            <person name="McLeod M.P."/>
            <person name="McPherson D."/>
            <person name="Merkulov G."/>
            <person name="Milshina N.V."/>
            <person name="Mobarry C."/>
            <person name="Morris J."/>
            <person name="Moshrefi A."/>
            <person name="Mount S.M."/>
            <person name="Moy M."/>
            <person name="Murphy B."/>
            <person name="Murphy L."/>
            <person name="Muzny D.M."/>
            <person name="Nelson D.L."/>
            <person name="Nelson D.R."/>
            <person name="Nelson K.A."/>
            <person name="Nixon K."/>
            <person name="Nusskern D.R."/>
            <person name="Pacleb J.M."/>
            <person name="Palazzolo M."/>
            <person name="Pittman G.S."/>
            <person name="Pan S."/>
            <person name="Pollard J."/>
            <person name="Puri V."/>
            <person name="Reese M.G."/>
            <person name="Reinert K."/>
            <person name="Remington K."/>
            <person name="Saunders R.D.C."/>
            <person name="Scheeler F."/>
            <person name="Shen H."/>
            <person name="Shue B.C."/>
            <person name="Siden-Kiamos I."/>
            <person name="Simpson M."/>
            <person name="Skupski M.P."/>
            <person name="Smith T.J."/>
            <person name="Spier E."/>
            <person name="Spradling A.C."/>
            <person name="Stapleton M."/>
            <person name="Strong R."/>
            <person name="Sun E."/>
            <person name="Svirskas R."/>
            <person name="Tector C."/>
            <person name="Turner R."/>
            <person name="Venter E."/>
            <person name="Wang A.H."/>
            <person name="Wang X."/>
            <person name="Wang Z.-Y."/>
            <person name="Wassarman D.A."/>
            <person name="Weinstock G.M."/>
            <person name="Weissenbach J."/>
            <person name="Williams S.M."/>
            <person name="Woodage T."/>
            <person name="Worley K.C."/>
            <person name="Wu D."/>
            <person name="Yang S."/>
            <person name="Yao Q.A."/>
            <person name="Ye J."/>
            <person name="Yeh R.-F."/>
            <person name="Zaveri J.S."/>
            <person name="Zhan M."/>
            <person name="Zhang G."/>
            <person name="Zhao Q."/>
            <person name="Zheng L."/>
            <person name="Zheng X.H."/>
            <person name="Zhong F.N."/>
            <person name="Zhong W."/>
            <person name="Zhou X."/>
            <person name="Zhu S.C."/>
            <person name="Zhu X."/>
            <person name="Smith H.O."/>
            <person name="Gibbs R.A."/>
            <person name="Myers E.W."/>
            <person name="Rubin G.M."/>
            <person name="Venter J.C."/>
        </authorList>
    </citation>
    <scope>NUCLEOTIDE SEQUENCE [LARGE SCALE GENOMIC DNA]</scope>
    <source>
        <strain>Berkeley</strain>
    </source>
</reference>
<reference key="3">
    <citation type="journal article" date="2002" name="Genome Biol.">
        <title>Annotation of the Drosophila melanogaster euchromatic genome: a systematic review.</title>
        <authorList>
            <person name="Misra S."/>
            <person name="Crosby M.A."/>
            <person name="Mungall C.J."/>
            <person name="Matthews B.B."/>
            <person name="Campbell K.S."/>
            <person name="Hradecky P."/>
            <person name="Huang Y."/>
            <person name="Kaminker J.S."/>
            <person name="Millburn G.H."/>
            <person name="Prochnik S.E."/>
            <person name="Smith C.D."/>
            <person name="Tupy J.L."/>
            <person name="Whitfield E.J."/>
            <person name="Bayraktaroglu L."/>
            <person name="Berman B.P."/>
            <person name="Bettencourt B.R."/>
            <person name="Celniker S.E."/>
            <person name="de Grey A.D.N.J."/>
            <person name="Drysdale R.A."/>
            <person name="Harris N.L."/>
            <person name="Richter J."/>
            <person name="Russo S."/>
            <person name="Schroeder A.J."/>
            <person name="Shu S.Q."/>
            <person name="Stapleton M."/>
            <person name="Yamada C."/>
            <person name="Ashburner M."/>
            <person name="Gelbart W.M."/>
            <person name="Rubin G.M."/>
            <person name="Lewis S.E."/>
        </authorList>
    </citation>
    <scope>GENOME REANNOTATION</scope>
    <source>
        <strain>Berkeley</strain>
    </source>
</reference>
<reference key="4">
    <citation type="journal article" date="2002" name="Genome Biol.">
        <title>A Drosophila full-length cDNA resource.</title>
        <authorList>
            <person name="Stapleton M."/>
            <person name="Carlson J.W."/>
            <person name="Brokstein P."/>
            <person name="Yu C."/>
            <person name="Champe M."/>
            <person name="George R.A."/>
            <person name="Guarin H."/>
            <person name="Kronmiller B."/>
            <person name="Pacleb J.M."/>
            <person name="Park S."/>
            <person name="Wan K.H."/>
            <person name="Rubin G.M."/>
            <person name="Celniker S.E."/>
        </authorList>
    </citation>
    <scope>NUCLEOTIDE SEQUENCE [LARGE SCALE MRNA]</scope>
    <source>
        <strain>Berkeley</strain>
        <tissue>Head</tissue>
    </source>
</reference>
<proteinExistence type="evidence at transcript level"/>
<protein>
    <recommendedName>
        <fullName>Protein tipE</fullName>
    </recommendedName>
    <alternativeName>
        <fullName>Temperature-induced paralytic E</fullName>
    </alternativeName>
</protein>
<keyword id="KW-0325">Glycoprotein</keyword>
<keyword id="KW-0472">Membrane</keyword>
<keyword id="KW-1185">Reference proteome</keyword>
<keyword id="KW-0812">Transmembrane</keyword>
<keyword id="KW-1133">Transmembrane helix</keyword>
<name>TIPE_DROME</name>
<sequence>MGDEQDKRTGKEKLLFYTTAFFILLGTFSLFAFLFLVPFVIEPAFTTIFMQFEEVPALCETYDTEIYYGAKNCSWSSCREGCTKDIYTCTQIRVNYRLNLYNFTDEFNFTEYHINLKEAERILPPVKRTDRYERALRSDYEYDNLGGGTGLDIDLGAGRMEQLNFGDADGSNGYLIEDSEDTRGLSASGTLISDERRPFDEISELNEGLMGNRSMYYYVGARLFPNVKGCGYPPMLNCTIWLKRYTKIGMKFPCYYSKVDPSLVISDLDYWQNTLNLVYSMAIPIPSFIISVIYLTYAYFKIYNEDEETAPLDKNAEDMDIDDIDAVDDSDGAVLADNVAGSQIINMDSTTNDSCLEGVLPNGGPGMTASISQGGSVTTPGPYIAQSPAGSQMTPNSEINSFGHQLKVQMADELSRDSLENGAISTSNSVQGNLSKTMTTSISTPPGPTAAV</sequence>
<gene>
    <name type="primary">tipE</name>
    <name type="ORF">CG1232</name>
</gene>
<comment type="function">
    <text evidence="3">Enhances para sodium channel function. Required during pupal development to rescue adult paralysis and also protects adult flies against heat-induced lethality.</text>
</comment>
<comment type="subcellular location">
    <subcellularLocation>
        <location>Membrane</location>
        <topology>Multi-pass membrane protein</topology>
    </subcellularLocation>
</comment>
<comment type="tissue specificity">
    <text evidence="3">Preferentially expressed in the central nervous system of developing embryos, weaker expression is seen in the peripheral nervous system. In pupae and adults, expression is seen predominantly in heads, body and legs.</text>
</comment>
<comment type="developmental stage">
    <text evidence="3">Expressed weakly in middle to late embryos, absent in larvae and is most abundantly expressed in middle to late pupal stages.</text>
</comment>
<organism>
    <name type="scientific">Drosophila melanogaster</name>
    <name type="common">Fruit fly</name>
    <dbReference type="NCBI Taxonomy" id="7227"/>
    <lineage>
        <taxon>Eukaryota</taxon>
        <taxon>Metazoa</taxon>
        <taxon>Ecdysozoa</taxon>
        <taxon>Arthropoda</taxon>
        <taxon>Hexapoda</taxon>
        <taxon>Insecta</taxon>
        <taxon>Pterygota</taxon>
        <taxon>Neoptera</taxon>
        <taxon>Endopterygota</taxon>
        <taxon>Diptera</taxon>
        <taxon>Brachycera</taxon>
        <taxon>Muscomorpha</taxon>
        <taxon>Ephydroidea</taxon>
        <taxon>Drosophilidae</taxon>
        <taxon>Drosophila</taxon>
        <taxon>Sophophora</taxon>
    </lineage>
</organism>